<accession>B5RRM9</accession>
<name>PURA_BORRA</name>
<comment type="function">
    <text evidence="1">Plays an important role in the de novo pathway of purine nucleotide biosynthesis. Catalyzes the first committed step in the biosynthesis of AMP from IMP.</text>
</comment>
<comment type="catalytic activity">
    <reaction evidence="1">
        <text>IMP + L-aspartate + GTP = N(6)-(1,2-dicarboxyethyl)-AMP + GDP + phosphate + 2 H(+)</text>
        <dbReference type="Rhea" id="RHEA:15753"/>
        <dbReference type="ChEBI" id="CHEBI:15378"/>
        <dbReference type="ChEBI" id="CHEBI:29991"/>
        <dbReference type="ChEBI" id="CHEBI:37565"/>
        <dbReference type="ChEBI" id="CHEBI:43474"/>
        <dbReference type="ChEBI" id="CHEBI:57567"/>
        <dbReference type="ChEBI" id="CHEBI:58053"/>
        <dbReference type="ChEBI" id="CHEBI:58189"/>
        <dbReference type="EC" id="6.3.4.4"/>
    </reaction>
</comment>
<comment type="cofactor">
    <cofactor evidence="1">
        <name>Mg(2+)</name>
        <dbReference type="ChEBI" id="CHEBI:18420"/>
    </cofactor>
    <text evidence="1">Binds 1 Mg(2+) ion per subunit.</text>
</comment>
<comment type="pathway">
    <text evidence="1">Purine metabolism; AMP biosynthesis via de novo pathway; AMP from IMP: step 1/2.</text>
</comment>
<comment type="subunit">
    <text evidence="1">Homodimer.</text>
</comment>
<comment type="subcellular location">
    <subcellularLocation>
        <location evidence="1">Cytoplasm</location>
    </subcellularLocation>
</comment>
<comment type="similarity">
    <text evidence="1">Belongs to the adenylosuccinate synthetase family.</text>
</comment>
<protein>
    <recommendedName>
        <fullName evidence="1">Adenylosuccinate synthetase</fullName>
        <shortName evidence="1">AMPSase</shortName>
        <shortName evidence="1">AdSS</shortName>
        <ecNumber evidence="1">6.3.4.4</ecNumber>
    </recommendedName>
    <alternativeName>
        <fullName evidence="1">IMP--aspartate ligase</fullName>
    </alternativeName>
</protein>
<proteinExistence type="inferred from homology"/>
<reference key="1">
    <citation type="journal article" date="2008" name="PLoS Genet.">
        <title>The genome of Borrelia recurrentis, the agent of deadly louse-borne relapsing fever, is a degraded subset of tick-borne Borrelia duttonii.</title>
        <authorList>
            <person name="Lescot M."/>
            <person name="Audic S."/>
            <person name="Robert C."/>
            <person name="Nguyen T.T."/>
            <person name="Blanc G."/>
            <person name="Cutler S.J."/>
            <person name="Wincker P."/>
            <person name="Couloux A."/>
            <person name="Claverie J.-M."/>
            <person name="Raoult D."/>
            <person name="Drancourt M."/>
        </authorList>
    </citation>
    <scope>NUCLEOTIDE SEQUENCE [LARGE SCALE GENOMIC DNA]</scope>
    <source>
        <strain>A1</strain>
    </source>
</reference>
<feature type="chain" id="PRO_1000089273" description="Adenylosuccinate synthetase">
    <location>
        <begin position="1"/>
        <end position="427"/>
    </location>
</feature>
<feature type="active site" description="Proton acceptor" evidence="1">
    <location>
        <position position="13"/>
    </location>
</feature>
<feature type="active site" description="Proton donor" evidence="1">
    <location>
        <position position="41"/>
    </location>
</feature>
<feature type="binding site" evidence="1">
    <location>
        <begin position="12"/>
        <end position="18"/>
    </location>
    <ligand>
        <name>GTP</name>
        <dbReference type="ChEBI" id="CHEBI:37565"/>
    </ligand>
</feature>
<feature type="binding site" description="in other chain" evidence="1">
    <location>
        <begin position="13"/>
        <end position="16"/>
    </location>
    <ligand>
        <name>IMP</name>
        <dbReference type="ChEBI" id="CHEBI:58053"/>
        <note>ligand shared between dimeric partners</note>
    </ligand>
</feature>
<feature type="binding site" evidence="1">
    <location>
        <position position="13"/>
    </location>
    <ligand>
        <name>Mg(2+)</name>
        <dbReference type="ChEBI" id="CHEBI:18420"/>
    </ligand>
</feature>
<feature type="binding site" description="in other chain" evidence="1">
    <location>
        <begin position="38"/>
        <end position="41"/>
    </location>
    <ligand>
        <name>IMP</name>
        <dbReference type="ChEBI" id="CHEBI:58053"/>
        <note>ligand shared between dimeric partners</note>
    </ligand>
</feature>
<feature type="binding site" evidence="1">
    <location>
        <begin position="40"/>
        <end position="42"/>
    </location>
    <ligand>
        <name>GTP</name>
        <dbReference type="ChEBI" id="CHEBI:37565"/>
    </ligand>
</feature>
<feature type="binding site" evidence="1">
    <location>
        <position position="40"/>
    </location>
    <ligand>
        <name>Mg(2+)</name>
        <dbReference type="ChEBI" id="CHEBI:18420"/>
    </ligand>
</feature>
<feature type="binding site" description="in other chain" evidence="1">
    <location>
        <position position="126"/>
    </location>
    <ligand>
        <name>IMP</name>
        <dbReference type="ChEBI" id="CHEBI:58053"/>
        <note>ligand shared between dimeric partners</note>
    </ligand>
</feature>
<feature type="binding site" evidence="1">
    <location>
        <position position="140"/>
    </location>
    <ligand>
        <name>IMP</name>
        <dbReference type="ChEBI" id="CHEBI:58053"/>
        <note>ligand shared between dimeric partners</note>
    </ligand>
</feature>
<feature type="binding site" description="in other chain" evidence="1">
    <location>
        <position position="221"/>
    </location>
    <ligand>
        <name>IMP</name>
        <dbReference type="ChEBI" id="CHEBI:58053"/>
        <note>ligand shared between dimeric partners</note>
    </ligand>
</feature>
<feature type="binding site" description="in other chain" evidence="1">
    <location>
        <position position="236"/>
    </location>
    <ligand>
        <name>IMP</name>
        <dbReference type="ChEBI" id="CHEBI:58053"/>
        <note>ligand shared between dimeric partners</note>
    </ligand>
</feature>
<feature type="binding site" evidence="1">
    <location>
        <begin position="295"/>
        <end position="301"/>
    </location>
    <ligand>
        <name>substrate</name>
    </ligand>
</feature>
<feature type="binding site" description="in other chain" evidence="1">
    <location>
        <position position="299"/>
    </location>
    <ligand>
        <name>IMP</name>
        <dbReference type="ChEBI" id="CHEBI:58053"/>
        <note>ligand shared between dimeric partners</note>
    </ligand>
</feature>
<feature type="binding site" evidence="1">
    <location>
        <position position="301"/>
    </location>
    <ligand>
        <name>GTP</name>
        <dbReference type="ChEBI" id="CHEBI:37565"/>
    </ligand>
</feature>
<feature type="binding site" evidence="1">
    <location>
        <begin position="327"/>
        <end position="329"/>
    </location>
    <ligand>
        <name>GTP</name>
        <dbReference type="ChEBI" id="CHEBI:37565"/>
    </ligand>
</feature>
<feature type="binding site" evidence="1">
    <location>
        <begin position="409"/>
        <end position="411"/>
    </location>
    <ligand>
        <name>GTP</name>
        <dbReference type="ChEBI" id="CHEBI:37565"/>
    </ligand>
</feature>
<gene>
    <name evidence="1" type="primary">purA</name>
    <name type="ordered locus">BRE_423</name>
</gene>
<organism>
    <name type="scientific">Borrelia recurrentis (strain A1)</name>
    <dbReference type="NCBI Taxonomy" id="412418"/>
    <lineage>
        <taxon>Bacteria</taxon>
        <taxon>Pseudomonadati</taxon>
        <taxon>Spirochaetota</taxon>
        <taxon>Spirochaetia</taxon>
        <taxon>Spirochaetales</taxon>
        <taxon>Borreliaceae</taxon>
        <taxon>Borrelia</taxon>
    </lineage>
</organism>
<dbReference type="EC" id="6.3.4.4" evidence="1"/>
<dbReference type="EMBL" id="CP000993">
    <property type="protein sequence ID" value="ACH94663.1"/>
    <property type="molecule type" value="Genomic_DNA"/>
</dbReference>
<dbReference type="RefSeq" id="WP_012538894.1">
    <property type="nucleotide sequence ID" value="NC_011244.1"/>
</dbReference>
<dbReference type="SMR" id="B5RRM9"/>
<dbReference type="KEGG" id="bre:BRE_423"/>
<dbReference type="HOGENOM" id="CLU_029848_0_0_12"/>
<dbReference type="UniPathway" id="UPA00075">
    <property type="reaction ID" value="UER00335"/>
</dbReference>
<dbReference type="Proteomes" id="UP000000612">
    <property type="component" value="Chromosome"/>
</dbReference>
<dbReference type="GO" id="GO:0005737">
    <property type="term" value="C:cytoplasm"/>
    <property type="evidence" value="ECO:0007669"/>
    <property type="project" value="UniProtKB-SubCell"/>
</dbReference>
<dbReference type="GO" id="GO:0004019">
    <property type="term" value="F:adenylosuccinate synthase activity"/>
    <property type="evidence" value="ECO:0007669"/>
    <property type="project" value="UniProtKB-UniRule"/>
</dbReference>
<dbReference type="GO" id="GO:0005525">
    <property type="term" value="F:GTP binding"/>
    <property type="evidence" value="ECO:0007669"/>
    <property type="project" value="UniProtKB-UniRule"/>
</dbReference>
<dbReference type="GO" id="GO:0000287">
    <property type="term" value="F:magnesium ion binding"/>
    <property type="evidence" value="ECO:0007669"/>
    <property type="project" value="UniProtKB-UniRule"/>
</dbReference>
<dbReference type="GO" id="GO:0044208">
    <property type="term" value="P:'de novo' AMP biosynthetic process"/>
    <property type="evidence" value="ECO:0007669"/>
    <property type="project" value="UniProtKB-UniRule"/>
</dbReference>
<dbReference type="GO" id="GO:0046040">
    <property type="term" value="P:IMP metabolic process"/>
    <property type="evidence" value="ECO:0007669"/>
    <property type="project" value="TreeGrafter"/>
</dbReference>
<dbReference type="CDD" id="cd03108">
    <property type="entry name" value="AdSS"/>
    <property type="match status" value="1"/>
</dbReference>
<dbReference type="FunFam" id="1.10.300.10:FF:000001">
    <property type="entry name" value="Adenylosuccinate synthetase"/>
    <property type="match status" value="1"/>
</dbReference>
<dbReference type="FunFam" id="3.90.170.10:FF:000001">
    <property type="entry name" value="Adenylosuccinate synthetase"/>
    <property type="match status" value="1"/>
</dbReference>
<dbReference type="Gene3D" id="3.40.440.10">
    <property type="entry name" value="Adenylosuccinate Synthetase, subunit A, domain 1"/>
    <property type="match status" value="1"/>
</dbReference>
<dbReference type="Gene3D" id="1.10.300.10">
    <property type="entry name" value="Adenylosuccinate Synthetase, subunit A, domain 2"/>
    <property type="match status" value="1"/>
</dbReference>
<dbReference type="Gene3D" id="3.90.170.10">
    <property type="entry name" value="Adenylosuccinate Synthetase, subunit A, domain 3"/>
    <property type="match status" value="1"/>
</dbReference>
<dbReference type="HAMAP" id="MF_00011">
    <property type="entry name" value="Adenylosucc_synth"/>
    <property type="match status" value="1"/>
</dbReference>
<dbReference type="InterPro" id="IPR018220">
    <property type="entry name" value="Adenylosuccin_syn_GTP-bd"/>
</dbReference>
<dbReference type="InterPro" id="IPR033128">
    <property type="entry name" value="Adenylosuccin_syn_Lys_AS"/>
</dbReference>
<dbReference type="InterPro" id="IPR042109">
    <property type="entry name" value="Adenylosuccinate_synth_dom1"/>
</dbReference>
<dbReference type="InterPro" id="IPR042110">
    <property type="entry name" value="Adenylosuccinate_synth_dom2"/>
</dbReference>
<dbReference type="InterPro" id="IPR042111">
    <property type="entry name" value="Adenylosuccinate_synth_dom3"/>
</dbReference>
<dbReference type="InterPro" id="IPR001114">
    <property type="entry name" value="Adenylosuccinate_synthetase"/>
</dbReference>
<dbReference type="InterPro" id="IPR027417">
    <property type="entry name" value="P-loop_NTPase"/>
</dbReference>
<dbReference type="NCBIfam" id="NF002223">
    <property type="entry name" value="PRK01117.1"/>
    <property type="match status" value="1"/>
</dbReference>
<dbReference type="NCBIfam" id="TIGR00184">
    <property type="entry name" value="purA"/>
    <property type="match status" value="1"/>
</dbReference>
<dbReference type="PANTHER" id="PTHR11846">
    <property type="entry name" value="ADENYLOSUCCINATE SYNTHETASE"/>
    <property type="match status" value="1"/>
</dbReference>
<dbReference type="PANTHER" id="PTHR11846:SF0">
    <property type="entry name" value="ADENYLOSUCCINATE SYNTHETASE"/>
    <property type="match status" value="1"/>
</dbReference>
<dbReference type="Pfam" id="PF00709">
    <property type="entry name" value="Adenylsucc_synt"/>
    <property type="match status" value="1"/>
</dbReference>
<dbReference type="SMART" id="SM00788">
    <property type="entry name" value="Adenylsucc_synt"/>
    <property type="match status" value="1"/>
</dbReference>
<dbReference type="SUPFAM" id="SSF52540">
    <property type="entry name" value="P-loop containing nucleoside triphosphate hydrolases"/>
    <property type="match status" value="1"/>
</dbReference>
<dbReference type="PROSITE" id="PS01266">
    <property type="entry name" value="ADENYLOSUCCIN_SYN_1"/>
    <property type="match status" value="1"/>
</dbReference>
<dbReference type="PROSITE" id="PS00513">
    <property type="entry name" value="ADENYLOSUCCIN_SYN_2"/>
    <property type="match status" value="1"/>
</dbReference>
<keyword id="KW-0963">Cytoplasm</keyword>
<keyword id="KW-0342">GTP-binding</keyword>
<keyword id="KW-0436">Ligase</keyword>
<keyword id="KW-0460">Magnesium</keyword>
<keyword id="KW-0479">Metal-binding</keyword>
<keyword id="KW-0547">Nucleotide-binding</keyword>
<keyword id="KW-0658">Purine biosynthesis</keyword>
<sequence>MAIYAVVGTQWGDEGKGKIIDFLSSKIDYVVRFNGGNNAGHTIVVNDKKFIFNLLPSGVLQGAKCILGPSVVIDPLILIQELEVLKNNNIKTEIFISDKAHIIMPYHIKFDELSEQKKGIHKIGTTKKGIGPCYADKINRIGIRTIDLLNTEIFANKLKTNLEEKNQIIEKIYNDKPLDYDDILNTYKKYIEILKSLITNTEKILHHAINSEKYILIEGAQGTMLDIEHGTFPFVTSSNTLITAAAGCGIPISKIKQKIGIIKAFSSRVGSGPFVTEISNSIGDIIREKGQEYGSTTKRPRRIGWLDLLTIKKAIALNELNHLALTKLDILNNIESLKICIAYEFQGKIYDYIPTSCETIEKVKPIYKVFKGFKEDISNIKNYDDLPIEAREYIEFIEKEVGIQISILSVGSEREKTIFRNQEWSNI</sequence>
<evidence type="ECO:0000255" key="1">
    <source>
        <dbReference type="HAMAP-Rule" id="MF_00011"/>
    </source>
</evidence>